<name>CHIT_TRISX</name>
<proteinExistence type="evidence at protein level"/>
<feature type="chain" id="PRO_0000430496" description="Endochitinase">
    <location>
        <begin position="1"/>
        <end position="11" status="greater than"/>
    </location>
</feature>
<feature type="non-terminal residue" evidence="4">
    <location>
        <position position="11"/>
    </location>
</feature>
<evidence type="ECO:0000250" key="1">
    <source>
        <dbReference type="UniProtKB" id="P05315"/>
    </source>
</evidence>
<evidence type="ECO:0000250" key="2">
    <source>
        <dbReference type="UniProtKB" id="Q42993"/>
    </source>
</evidence>
<evidence type="ECO:0000269" key="3">
    <source>
    </source>
</evidence>
<evidence type="ECO:0000303" key="4">
    <source>
    </source>
</evidence>
<evidence type="ECO:0000305" key="5"/>
<keyword id="KW-0020">Allergen</keyword>
<keyword id="KW-0119">Carbohydrate metabolism</keyword>
<keyword id="KW-0146">Chitin degradation</keyword>
<keyword id="KW-0147">Chitin-binding</keyword>
<keyword id="KW-0903">Direct protein sequencing</keyword>
<keyword id="KW-0326">Glycosidase</keyword>
<keyword id="KW-0378">Hydrolase</keyword>
<keyword id="KW-0611">Plant defense</keyword>
<keyword id="KW-0624">Polysaccharide degradation</keyword>
<organism>
    <name type="scientific">Triplochiton scleroxylon</name>
    <name type="common">African obeche tree</name>
    <name type="synonym">Samba scleroxylon</name>
    <dbReference type="NCBI Taxonomy" id="1521447"/>
    <lineage>
        <taxon>Eukaryota</taxon>
        <taxon>Viridiplantae</taxon>
        <taxon>Streptophyta</taxon>
        <taxon>Embryophyta</taxon>
        <taxon>Tracheophyta</taxon>
        <taxon>Spermatophyta</taxon>
        <taxon>Magnoliopsida</taxon>
        <taxon>eudicotyledons</taxon>
        <taxon>Gunneridae</taxon>
        <taxon>Pentapetalae</taxon>
        <taxon>rosids</taxon>
        <taxon>malvids</taxon>
        <taxon>Malvales</taxon>
        <taxon>Malvaceae</taxon>
        <taxon>Helicteroideae</taxon>
        <taxon>Triplochiton</taxon>
    </lineage>
</organism>
<accession>C0HJM6</accession>
<dbReference type="EC" id="3.2.1.14" evidence="3"/>
<dbReference type="Allergome" id="11674">
    <property type="allergen name" value="Trip s 1.0101"/>
</dbReference>
<dbReference type="Allergome" id="1171">
    <property type="allergen name" value="Trip s 1"/>
</dbReference>
<dbReference type="GO" id="GO:0008061">
    <property type="term" value="F:chitin binding"/>
    <property type="evidence" value="ECO:0007669"/>
    <property type="project" value="UniProtKB-KW"/>
</dbReference>
<dbReference type="GO" id="GO:0008843">
    <property type="term" value="F:endochitinase activity"/>
    <property type="evidence" value="ECO:0007669"/>
    <property type="project" value="UniProtKB-EC"/>
</dbReference>
<dbReference type="GO" id="GO:0006032">
    <property type="term" value="P:chitin catabolic process"/>
    <property type="evidence" value="ECO:0007669"/>
    <property type="project" value="UniProtKB-KW"/>
</dbReference>
<dbReference type="GO" id="GO:0006952">
    <property type="term" value="P:defense response"/>
    <property type="evidence" value="ECO:0007669"/>
    <property type="project" value="UniProtKB-KW"/>
</dbReference>
<dbReference type="GO" id="GO:0000272">
    <property type="term" value="P:polysaccharide catabolic process"/>
    <property type="evidence" value="ECO:0007669"/>
    <property type="project" value="UniProtKB-KW"/>
</dbReference>
<comment type="function">
    <text evidence="2 3">Hydrolyzes chitin and may play a role in defense against fungal pathogens containing chitin.</text>
</comment>
<comment type="catalytic activity">
    <reaction evidence="3">
        <text>Random endo-hydrolysis of N-acetyl-beta-D-glucosaminide (1-&gt;4)-beta-linkages in chitin and chitodextrins.</text>
        <dbReference type="EC" id="3.2.1.14"/>
    </reaction>
</comment>
<comment type="allergen">
    <text evidence="3">Causes an allergic reaction in human. Binds to IgE. It exhibits some cross-reactivity with IgE antibodies from patients sensitized to latex.</text>
</comment>
<comment type="similarity">
    <text evidence="2">Belongs to the glycosyl hydrolase 19 family. Chitinase class I subfamily.</text>
</comment>
<protein>
    <recommendedName>
        <fullName evidence="1">Endochitinase</fullName>
        <ecNumber evidence="3">3.2.1.14</ecNumber>
    </recommendedName>
    <alternativeName>
        <fullName evidence="4">Chitinase</fullName>
    </alternativeName>
    <allergenName evidence="4">Trip s 1</allergenName>
</protein>
<sequence length="11" mass="990">EQGGSQAGGSL</sequence>
<reference evidence="5" key="1">
    <citation type="journal article" date="2005" name="Allergy">
        <title>Identification of an obeche (Triplochiton scleroxylon) wood allergen as a class I chitinase.</title>
        <authorList>
            <person name="Kespohl S."/>
            <person name="Sander I."/>
            <person name="Merget R."/>
            <person name="Petersen A."/>
            <person name="Meyer H."/>
            <person name="Sickmann A."/>
            <person name="Bruening T."/>
            <person name="Raulf-Heimsoth M."/>
        </authorList>
    </citation>
    <scope>PROTEIN SEQUENCE</scope>
    <scope>IDENTIFICATION BY MASS SPECTROMETRY</scope>
    <scope>FUNCTION</scope>
    <scope>CATALYTIC ACTIVITY</scope>
    <scope>ALLERGEN</scope>
    <source>
        <tissue evidence="3">Trunk</tissue>
    </source>
</reference>